<sequence length="85" mass="9286">MEGEGRREDGDCSYLCIPFNSIRDIFQSFFTRFRGLTPDNSPVTISQEVEEETEVVNIPRSVVSGNVAARKGKQQTSSGKGGGTN</sequence>
<gene>
    <name type="primary">PEP7</name>
    <name type="synonym">PROPEP7</name>
    <name type="ordered locus">At5g09978</name>
    <name type="ORF">MYH9</name>
</gene>
<reference key="1">
    <citation type="journal article" date="1998" name="DNA Res.">
        <title>Structural analysis of Arabidopsis thaliana chromosome 5. VIII. Sequence features of the regions of 1,081,958 bp covered by seventeen physically assigned P1 and TAC clones.</title>
        <authorList>
            <person name="Asamizu E."/>
            <person name="Sato S."/>
            <person name="Kaneko T."/>
            <person name="Nakamura Y."/>
            <person name="Kotani H."/>
            <person name="Miyajima N."/>
            <person name="Tabata S."/>
        </authorList>
    </citation>
    <scope>NUCLEOTIDE SEQUENCE [LARGE SCALE GENOMIC DNA]</scope>
    <source>
        <strain>cv. Columbia</strain>
    </source>
</reference>
<reference key="2">
    <citation type="journal article" date="2017" name="Plant J.">
        <title>Araport11: a complete reannotation of the Arabidopsis thaliana reference genome.</title>
        <authorList>
            <person name="Cheng C.Y."/>
            <person name="Krishnakumar V."/>
            <person name="Chan A.P."/>
            <person name="Thibaud-Nissen F."/>
            <person name="Schobel S."/>
            <person name="Town C.D."/>
        </authorList>
    </citation>
    <scope>GENOME REANNOTATION</scope>
    <source>
        <strain>cv. Columbia</strain>
    </source>
</reference>
<reference key="3">
    <citation type="journal article" date="2006" name="Plant Biotechnol. J.">
        <title>Simultaneous high-throughput recombinational cloning of open reading frames in closed and open configurations.</title>
        <authorList>
            <person name="Underwood B.A."/>
            <person name="Vanderhaeghen R."/>
            <person name="Whitford R."/>
            <person name="Town C.D."/>
            <person name="Hilson P."/>
        </authorList>
    </citation>
    <scope>NUCLEOTIDE SEQUENCE [LARGE SCALE MRNA]</scope>
    <source>
        <strain>cv. Columbia</strain>
    </source>
</reference>
<reference key="4">
    <citation type="journal article" date="2006" name="Proc. Natl. Acad. Sci. U.S.A.">
        <title>An endogenous peptide signal in Arabidopsis activates components of the innate immune response.</title>
        <authorList>
            <person name="Huffaker A."/>
            <person name="Pearce G."/>
            <person name="Ryan C.A."/>
        </authorList>
    </citation>
    <scope>GENE FAMILY</scope>
    <scope>NOMENCLATURE</scope>
</reference>
<comment type="function">
    <text evidence="1">Elicitor of plant defense.</text>
</comment>
<comment type="similarity">
    <text evidence="3">Belongs to the brassicaceae elicitor peptide family.</text>
</comment>
<proteinExistence type="inferred from homology"/>
<feature type="propeptide" id="PRO_0000249091" evidence="1">
    <location>
        <begin position="1"/>
        <end position="62"/>
    </location>
</feature>
<feature type="peptide" id="PRO_0000249092" description="Elicitor peptide 7">
    <location>
        <begin position="63"/>
        <end position="85"/>
    </location>
</feature>
<feature type="region of interest" description="Disordered" evidence="2">
    <location>
        <begin position="66"/>
        <end position="85"/>
    </location>
</feature>
<feature type="site" description="Required for ligand-receptor interaction" evidence="1">
    <location>
        <position position="79"/>
    </location>
</feature>
<dbReference type="EMBL" id="AB016893">
    <property type="status" value="NOT_ANNOTATED_CDS"/>
    <property type="molecule type" value="Genomic_DNA"/>
</dbReference>
<dbReference type="EMBL" id="CP002688">
    <property type="protein sequence ID" value="AED91474.1"/>
    <property type="molecule type" value="Genomic_DNA"/>
</dbReference>
<dbReference type="EMBL" id="DQ487624">
    <property type="protein sequence ID" value="ABF59253.1"/>
    <property type="molecule type" value="mRNA"/>
</dbReference>
<dbReference type="RefSeq" id="NP_001078561.1">
    <property type="nucleotide sequence ID" value="NM_001085092.3"/>
</dbReference>
<dbReference type="STRING" id="3702.P0C1T5"/>
<dbReference type="PaxDb" id="3702-AT5G09978.1"/>
<dbReference type="ProteomicsDB" id="235072"/>
<dbReference type="EnsemblPlants" id="AT5G09978.1">
    <property type="protein sequence ID" value="AT5G09978.1"/>
    <property type="gene ID" value="AT5G09978"/>
</dbReference>
<dbReference type="GeneID" id="5008207"/>
<dbReference type="Gramene" id="AT5G09978.1">
    <property type="protein sequence ID" value="AT5G09978.1"/>
    <property type="gene ID" value="AT5G09978"/>
</dbReference>
<dbReference type="KEGG" id="ath:AT5G09978"/>
<dbReference type="Araport" id="AT5G09978"/>
<dbReference type="TAIR" id="AT5G09978">
    <property type="gene designation" value="PEP7"/>
</dbReference>
<dbReference type="HOGENOM" id="CLU_2515742_0_0_1"/>
<dbReference type="InParanoid" id="P0C1T5"/>
<dbReference type="OMA" id="YLCIPFN"/>
<dbReference type="PRO" id="PR:P0C1T5"/>
<dbReference type="Proteomes" id="UP000006548">
    <property type="component" value="Chromosome 5"/>
</dbReference>
<dbReference type="ExpressionAtlas" id="P0C1T5">
    <property type="expression patterns" value="baseline and differential"/>
</dbReference>
<dbReference type="GO" id="GO:0045087">
    <property type="term" value="P:innate immune response"/>
    <property type="evidence" value="ECO:0007669"/>
    <property type="project" value="InterPro"/>
</dbReference>
<dbReference type="InterPro" id="IPR035176">
    <property type="entry name" value="PEP"/>
</dbReference>
<dbReference type="Pfam" id="PF17232">
    <property type="entry name" value="Pep1_7"/>
    <property type="match status" value="1"/>
</dbReference>
<name>PEP7_ARATH</name>
<organism>
    <name type="scientific">Arabidopsis thaliana</name>
    <name type="common">Mouse-ear cress</name>
    <dbReference type="NCBI Taxonomy" id="3702"/>
    <lineage>
        <taxon>Eukaryota</taxon>
        <taxon>Viridiplantae</taxon>
        <taxon>Streptophyta</taxon>
        <taxon>Embryophyta</taxon>
        <taxon>Tracheophyta</taxon>
        <taxon>Spermatophyta</taxon>
        <taxon>Magnoliopsida</taxon>
        <taxon>eudicotyledons</taxon>
        <taxon>Gunneridae</taxon>
        <taxon>Pentapetalae</taxon>
        <taxon>rosids</taxon>
        <taxon>malvids</taxon>
        <taxon>Brassicales</taxon>
        <taxon>Brassicaceae</taxon>
        <taxon>Camelineae</taxon>
        <taxon>Arabidopsis</taxon>
    </lineage>
</organism>
<keyword id="KW-0611">Plant defense</keyword>
<keyword id="KW-1185">Reference proteome</keyword>
<protein>
    <recommendedName>
        <fullName>Elicitor peptide 7</fullName>
    </recommendedName>
</protein>
<accession>P0C1T5</accession>
<accession>Q1G3G0</accession>
<evidence type="ECO:0000250" key="1"/>
<evidence type="ECO:0000256" key="2">
    <source>
        <dbReference type="SAM" id="MobiDB-lite"/>
    </source>
</evidence>
<evidence type="ECO:0000305" key="3"/>